<name>RIN3_MOUSE</name>
<organism>
    <name type="scientific">Mus musculus</name>
    <name type="common">Mouse</name>
    <dbReference type="NCBI Taxonomy" id="10090"/>
    <lineage>
        <taxon>Eukaryota</taxon>
        <taxon>Metazoa</taxon>
        <taxon>Chordata</taxon>
        <taxon>Craniata</taxon>
        <taxon>Vertebrata</taxon>
        <taxon>Euteleostomi</taxon>
        <taxon>Mammalia</taxon>
        <taxon>Eutheria</taxon>
        <taxon>Euarchontoglires</taxon>
        <taxon>Glires</taxon>
        <taxon>Rodentia</taxon>
        <taxon>Myomorpha</taxon>
        <taxon>Muroidea</taxon>
        <taxon>Muridae</taxon>
        <taxon>Murinae</taxon>
        <taxon>Mus</taxon>
        <taxon>Mus</taxon>
    </lineage>
</organism>
<protein>
    <recommendedName>
        <fullName>Ras and Rab interactor 3</fullName>
    </recommendedName>
    <alternativeName>
        <fullName>Ras interaction/interference protein 3</fullName>
    </alternativeName>
</protein>
<sequence length="980" mass="107220">MRRAEAPSSAHPAGPIPDAGKGEGEEDEEKDGTRLGLSTTPRNCIPRRGISVLEKLVKTCPVWLQLGLGQAEAAKILQQEMAGMFLVCRDNNLKQLVLCVHFPSLKGSSAEVLEYPIKEEKAILYLEGSVLVFEDIFRLIAFYCVSRDLLPFTLRLPQAILEASSFLELETISNLGLGFWDSSLNSRGSAEPLRSPAPGTPASSSLRPTTHYANCSCEIELSVGNDRLWFVNPIFIEDCILPADPPPLPTGSYPPRPTPATPDATSPTSKGSPRRPPPPPPLPTVPPTGPARPLAPPVPPAGPLPNSPLTPTSHLAPHAPGPPGHSNQPPMTACESLPRPAVGLGPFGEEEMKPGTTPNPLHQAPPPPLPLKKALPAAPPRRRISERVSLESQNVGTSTDRDHSGISRTASLNLPPQSTVSSLGDRPPRTTEQSQDTEAKASHADSIPVPPGKAKQPPVPPPRKKRVSRQLASTLLSPLESPIQEASSEKQATGASWEGLSPVRQAGMQHLQVQSSSCPQSSPEFKGSQASLSDSLGVPASAADQDSYSTSSAEEELEFSSPNVKKKPSMILDKARHRLSFVSFASVFHAFLSSDRKLYKKVVELAQDKSSYFGSLVQDYKVYSLEMMARQTSSTEMLQEIRTMMTQLKSYLLQSTELKALVEPTLHSEEELEAIVESALYKCVLKPLKEAINSSLLEIHSRDGSLQQLKENQLVVLATTTTDLGVTTSVPEVAVMEKILQKLTSMHKAYSPGKKISILLKTCKLIYDSMALGNPGKPYGADDFLPVLMYVLARSNLTEMLLNVEYMMELMDPALQLGEGSYYLTTTYGALEHIKNYDKITVTRQLSVEVQDSIHRWERRRTLNKARASRSSVQDFICVSYLKPEQQSRTLASRADTAAQALCAQCAEKFEVSQPQDYRLFVLVDGRCFQLADEALPHRIKGYLLRSEPKRDFHFVYRPQDSGKDASSQPCIVVREPNFL</sequence>
<evidence type="ECO:0000250" key="1"/>
<evidence type="ECO:0000250" key="2">
    <source>
        <dbReference type="UniProtKB" id="Q8TB24"/>
    </source>
</evidence>
<evidence type="ECO:0000255" key="3">
    <source>
        <dbReference type="PROSITE-ProRule" id="PRU00166"/>
    </source>
</evidence>
<evidence type="ECO:0000255" key="4">
    <source>
        <dbReference type="PROSITE-ProRule" id="PRU00550"/>
    </source>
</evidence>
<evidence type="ECO:0000256" key="5">
    <source>
        <dbReference type="SAM" id="MobiDB-lite"/>
    </source>
</evidence>
<evidence type="ECO:0000305" key="6"/>
<comment type="function">
    <text evidence="1">Ras effector protein that functions as a guanine nucleotide exchange (GEF) for RAB5B and RAB31, by exchanging bound GDP for free GTP. Required for normal RAB31 function (By similarity).</text>
</comment>
<comment type="subunit">
    <text evidence="1">Interacts with CD2AP, RAB5B, RAB31 and BIN1.</text>
</comment>
<comment type="subcellular location">
    <subcellularLocation>
        <location evidence="2">Cytoplasm</location>
    </subcellularLocation>
    <subcellularLocation>
        <location evidence="2">Cytoplasmic vesicle</location>
    </subcellularLocation>
    <subcellularLocation>
        <location evidence="2">Early endosome</location>
    </subcellularLocation>
    <text evidence="2">Activation of tyrosine phosphorylation signaling induces translocation to cytoplasmic vesicles.</text>
</comment>
<comment type="similarity">
    <text evidence="6">Belongs to the RIN (Ras interaction/interference) family.</text>
</comment>
<gene>
    <name type="primary">Rin3</name>
</gene>
<keyword id="KW-0963">Cytoplasm</keyword>
<keyword id="KW-0968">Cytoplasmic vesicle</keyword>
<keyword id="KW-0967">Endosome</keyword>
<keyword id="KW-0343">GTPase activation</keyword>
<keyword id="KW-1185">Reference proteome</keyword>
<keyword id="KW-0727">SH2 domain</keyword>
<dbReference type="EMBL" id="AK032205">
    <property type="protein sequence ID" value="BAC27757.1"/>
    <property type="molecule type" value="mRNA"/>
</dbReference>
<dbReference type="EMBL" id="BC137907">
    <property type="protein sequence ID" value="AAI37908.1"/>
    <property type="molecule type" value="mRNA"/>
</dbReference>
<dbReference type="CCDS" id="CCDS26118.1"/>
<dbReference type="RefSeq" id="NP_808288.2">
    <property type="nucleotide sequence ID" value="NM_177620.4"/>
</dbReference>
<dbReference type="SMR" id="P59729"/>
<dbReference type="BioGRID" id="229966">
    <property type="interactions" value="5"/>
</dbReference>
<dbReference type="FunCoup" id="P59729">
    <property type="interactions" value="921"/>
</dbReference>
<dbReference type="STRING" id="10090.ENSMUSP00000060771"/>
<dbReference type="GlyGen" id="P59729">
    <property type="glycosylation" value="6 sites, 1 O-linked glycan (1 site)"/>
</dbReference>
<dbReference type="iPTMnet" id="P59729"/>
<dbReference type="PhosphoSitePlus" id="P59729"/>
<dbReference type="jPOST" id="P59729"/>
<dbReference type="PaxDb" id="10090-ENSMUSP00000060771"/>
<dbReference type="ProteomicsDB" id="254884"/>
<dbReference type="Antibodypedia" id="26773">
    <property type="antibodies" value="83 antibodies from 23 providers"/>
</dbReference>
<dbReference type="DNASU" id="217835"/>
<dbReference type="Ensembl" id="ENSMUST00000056950.14">
    <property type="protein sequence ID" value="ENSMUSP00000060771.8"/>
    <property type="gene ID" value="ENSMUSG00000044456.17"/>
</dbReference>
<dbReference type="GeneID" id="217835"/>
<dbReference type="KEGG" id="mmu:217835"/>
<dbReference type="UCSC" id="uc007ouc.2">
    <property type="organism name" value="mouse"/>
</dbReference>
<dbReference type="AGR" id="MGI:2385708"/>
<dbReference type="CTD" id="79890"/>
<dbReference type="MGI" id="MGI:2385708">
    <property type="gene designation" value="Rin3"/>
</dbReference>
<dbReference type="VEuPathDB" id="HostDB:ENSMUSG00000044456"/>
<dbReference type="eggNOG" id="KOG2320">
    <property type="taxonomic scope" value="Eukaryota"/>
</dbReference>
<dbReference type="GeneTree" id="ENSGT00940000158622"/>
<dbReference type="InParanoid" id="P59729"/>
<dbReference type="OMA" id="RFEQDSY"/>
<dbReference type="OrthoDB" id="21085at2759"/>
<dbReference type="PhylomeDB" id="P59729"/>
<dbReference type="TreeFam" id="TF331067"/>
<dbReference type="Reactome" id="R-MMU-8876198">
    <property type="pathway name" value="RAB GEFs exchange GTP for GDP on RABs"/>
</dbReference>
<dbReference type="BioGRID-ORCS" id="217835">
    <property type="hits" value="2 hits in 75 CRISPR screens"/>
</dbReference>
<dbReference type="ChiTaRS" id="Rin3">
    <property type="organism name" value="mouse"/>
</dbReference>
<dbReference type="PRO" id="PR:P59729"/>
<dbReference type="Proteomes" id="UP000000589">
    <property type="component" value="Chromosome 12"/>
</dbReference>
<dbReference type="RNAct" id="P59729">
    <property type="molecule type" value="protein"/>
</dbReference>
<dbReference type="Bgee" id="ENSMUSG00000044456">
    <property type="expression patterns" value="Expressed in granulocyte and 149 other cell types or tissues"/>
</dbReference>
<dbReference type="ExpressionAtlas" id="P59729">
    <property type="expression patterns" value="baseline and differential"/>
</dbReference>
<dbReference type="GO" id="GO:0030424">
    <property type="term" value="C:axon"/>
    <property type="evidence" value="ECO:0000314"/>
    <property type="project" value="ARUK-UCL"/>
</dbReference>
<dbReference type="GO" id="GO:0031410">
    <property type="term" value="C:cytoplasmic vesicle"/>
    <property type="evidence" value="ECO:0000250"/>
    <property type="project" value="UniProtKB"/>
</dbReference>
<dbReference type="GO" id="GO:0030425">
    <property type="term" value="C:dendrite"/>
    <property type="evidence" value="ECO:0000314"/>
    <property type="project" value="ARUK-UCL"/>
</dbReference>
<dbReference type="GO" id="GO:0005769">
    <property type="term" value="C:early endosome"/>
    <property type="evidence" value="ECO:0000250"/>
    <property type="project" value="UniProtKB"/>
</dbReference>
<dbReference type="GO" id="GO:0030139">
    <property type="term" value="C:endocytic vesicle"/>
    <property type="evidence" value="ECO:0007669"/>
    <property type="project" value="Ensembl"/>
</dbReference>
<dbReference type="GO" id="GO:0043025">
    <property type="term" value="C:neuronal cell body"/>
    <property type="evidence" value="ECO:0000314"/>
    <property type="project" value="ARUK-UCL"/>
</dbReference>
<dbReference type="GO" id="GO:0005096">
    <property type="term" value="F:GTPase activator activity"/>
    <property type="evidence" value="ECO:0007669"/>
    <property type="project" value="UniProtKB-KW"/>
</dbReference>
<dbReference type="GO" id="GO:0005085">
    <property type="term" value="F:guanyl-nucleotide exchange factor activity"/>
    <property type="evidence" value="ECO:0000250"/>
    <property type="project" value="UniProtKB"/>
</dbReference>
<dbReference type="GO" id="GO:0031267">
    <property type="term" value="F:small GTPase binding"/>
    <property type="evidence" value="ECO:0000250"/>
    <property type="project" value="UniProtKB"/>
</dbReference>
<dbReference type="GO" id="GO:0060755">
    <property type="term" value="P:negative regulation of mast cell chemotaxis"/>
    <property type="evidence" value="ECO:0007669"/>
    <property type="project" value="Ensembl"/>
</dbReference>
<dbReference type="GO" id="GO:0002091">
    <property type="term" value="P:negative regulation of receptor internalization"/>
    <property type="evidence" value="ECO:0007669"/>
    <property type="project" value="Ensembl"/>
</dbReference>
<dbReference type="GO" id="GO:0097494">
    <property type="term" value="P:regulation of vesicle size"/>
    <property type="evidence" value="ECO:0007669"/>
    <property type="project" value="Ensembl"/>
</dbReference>
<dbReference type="GO" id="GO:0007165">
    <property type="term" value="P:signal transduction"/>
    <property type="evidence" value="ECO:0007669"/>
    <property type="project" value="InterPro"/>
</dbReference>
<dbReference type="GO" id="GO:0016192">
    <property type="term" value="P:vesicle-mediated transport"/>
    <property type="evidence" value="ECO:0007669"/>
    <property type="project" value="InterPro"/>
</dbReference>
<dbReference type="CDD" id="cd10395">
    <property type="entry name" value="SH2_RIN3"/>
    <property type="match status" value="1"/>
</dbReference>
<dbReference type="FunFam" id="1.20.1050.80:FF:000002">
    <property type="entry name" value="Ras and Rab interactor 2"/>
    <property type="match status" value="1"/>
</dbReference>
<dbReference type="FunFam" id="3.30.505.10:FF:000052">
    <property type="entry name" value="Ras and Rab interactor 2"/>
    <property type="match status" value="1"/>
</dbReference>
<dbReference type="Gene3D" id="3.30.505.10">
    <property type="entry name" value="SH2 domain"/>
    <property type="match status" value="1"/>
</dbReference>
<dbReference type="Gene3D" id="1.20.1050.80">
    <property type="entry name" value="VPS9 domain"/>
    <property type="match status" value="1"/>
</dbReference>
<dbReference type="InterPro" id="IPR000159">
    <property type="entry name" value="RA_dom"/>
</dbReference>
<dbReference type="InterPro" id="IPR035869">
    <property type="entry name" value="RIN3_SH2"/>
</dbReference>
<dbReference type="InterPro" id="IPR036860">
    <property type="entry name" value="SH2_dom_sf"/>
</dbReference>
<dbReference type="InterPro" id="IPR003123">
    <property type="entry name" value="VPS9"/>
</dbReference>
<dbReference type="InterPro" id="IPR045046">
    <property type="entry name" value="Vps9-like"/>
</dbReference>
<dbReference type="InterPro" id="IPR037191">
    <property type="entry name" value="VPS9_dom_sf"/>
</dbReference>
<dbReference type="PANTHER" id="PTHR23101">
    <property type="entry name" value="RAB GDP/GTP EXCHANGE FACTOR"/>
    <property type="match status" value="1"/>
</dbReference>
<dbReference type="PANTHER" id="PTHR23101:SF58">
    <property type="entry name" value="RAS AND RAB INTERACTOR 3"/>
    <property type="match status" value="1"/>
</dbReference>
<dbReference type="Pfam" id="PF00788">
    <property type="entry name" value="RA"/>
    <property type="match status" value="1"/>
</dbReference>
<dbReference type="Pfam" id="PF23268">
    <property type="entry name" value="RIN1"/>
    <property type="match status" value="1"/>
</dbReference>
<dbReference type="Pfam" id="PF02204">
    <property type="entry name" value="VPS9"/>
    <property type="match status" value="1"/>
</dbReference>
<dbReference type="SMART" id="SM00314">
    <property type="entry name" value="RA"/>
    <property type="match status" value="1"/>
</dbReference>
<dbReference type="SMART" id="SM00167">
    <property type="entry name" value="VPS9"/>
    <property type="match status" value="1"/>
</dbReference>
<dbReference type="SUPFAM" id="SSF55550">
    <property type="entry name" value="SH2 domain"/>
    <property type="match status" value="1"/>
</dbReference>
<dbReference type="SUPFAM" id="SSF109993">
    <property type="entry name" value="VPS9 domain"/>
    <property type="match status" value="1"/>
</dbReference>
<dbReference type="PROSITE" id="PS50200">
    <property type="entry name" value="RA"/>
    <property type="match status" value="1"/>
</dbReference>
<dbReference type="PROSITE" id="PS51205">
    <property type="entry name" value="VPS9"/>
    <property type="match status" value="1"/>
</dbReference>
<accession>P59729</accession>
<accession>B2RQF8</accession>
<proteinExistence type="evidence at protein level"/>
<feature type="chain" id="PRO_0000191323" description="Ras and Rab interactor 3">
    <location>
        <begin position="1"/>
        <end position="980"/>
    </location>
</feature>
<feature type="domain" description="SH2">
    <location>
        <begin position="63"/>
        <end position="158"/>
    </location>
</feature>
<feature type="domain" description="VPS9" evidence="4">
    <location>
        <begin position="700"/>
        <end position="843"/>
    </location>
</feature>
<feature type="domain" description="Ras-associating" evidence="3">
    <location>
        <begin position="865"/>
        <end position="962"/>
    </location>
</feature>
<feature type="region of interest" description="Disordered" evidence="5">
    <location>
        <begin position="1"/>
        <end position="40"/>
    </location>
</feature>
<feature type="region of interest" description="Disordered" evidence="5">
    <location>
        <begin position="247"/>
        <end position="496"/>
    </location>
</feature>
<feature type="region of interest" description="Disordered" evidence="5">
    <location>
        <begin position="509"/>
        <end position="560"/>
    </location>
</feature>
<feature type="region of interest" description="Interaction with RAB5B" evidence="1">
    <location>
        <begin position="584"/>
        <end position="729"/>
    </location>
</feature>
<feature type="compositionally biased region" description="Pro residues" evidence="5">
    <location>
        <begin position="247"/>
        <end position="260"/>
    </location>
</feature>
<feature type="compositionally biased region" description="Low complexity" evidence="5">
    <location>
        <begin position="261"/>
        <end position="271"/>
    </location>
</feature>
<feature type="compositionally biased region" description="Pro residues" evidence="5">
    <location>
        <begin position="274"/>
        <end position="308"/>
    </location>
</feature>
<feature type="compositionally biased region" description="Polar residues" evidence="5">
    <location>
        <begin position="406"/>
        <end position="422"/>
    </location>
</feature>
<feature type="compositionally biased region" description="Polar residues" evidence="5">
    <location>
        <begin position="484"/>
        <end position="494"/>
    </location>
</feature>
<feature type="compositionally biased region" description="Low complexity" evidence="5">
    <location>
        <begin position="514"/>
        <end position="523"/>
    </location>
</feature>
<feature type="sequence conflict" description="In Ref. 1; BAC27757." evidence="6" ref="1">
    <original>T</original>
    <variation>I</variation>
    <location>
        <position position="288"/>
    </location>
</feature>
<feature type="sequence conflict" description="In Ref. 1; BAC27757." evidence="6" ref="1">
    <original>T</original>
    <variation>K</variation>
    <location>
        <position position="332"/>
    </location>
</feature>
<feature type="sequence conflict" description="In Ref. 1; BAC27757." evidence="6" ref="1">
    <original>S</original>
    <variation>T</variation>
    <location>
        <position position="560"/>
    </location>
</feature>
<feature type="sequence conflict" description="In Ref. 1; BAC27757." evidence="6" ref="1">
    <original>NVK</original>
    <variation>DVE</variation>
    <location>
        <begin position="563"/>
        <end position="565"/>
    </location>
</feature>
<reference key="1">
    <citation type="journal article" date="2005" name="Science">
        <title>The transcriptional landscape of the mammalian genome.</title>
        <authorList>
            <person name="Carninci P."/>
            <person name="Kasukawa T."/>
            <person name="Katayama S."/>
            <person name="Gough J."/>
            <person name="Frith M.C."/>
            <person name="Maeda N."/>
            <person name="Oyama R."/>
            <person name="Ravasi T."/>
            <person name="Lenhard B."/>
            <person name="Wells C."/>
            <person name="Kodzius R."/>
            <person name="Shimokawa K."/>
            <person name="Bajic V.B."/>
            <person name="Brenner S.E."/>
            <person name="Batalov S."/>
            <person name="Forrest A.R."/>
            <person name="Zavolan M."/>
            <person name="Davis M.J."/>
            <person name="Wilming L.G."/>
            <person name="Aidinis V."/>
            <person name="Allen J.E."/>
            <person name="Ambesi-Impiombato A."/>
            <person name="Apweiler R."/>
            <person name="Aturaliya R.N."/>
            <person name="Bailey T.L."/>
            <person name="Bansal M."/>
            <person name="Baxter L."/>
            <person name="Beisel K.W."/>
            <person name="Bersano T."/>
            <person name="Bono H."/>
            <person name="Chalk A.M."/>
            <person name="Chiu K.P."/>
            <person name="Choudhary V."/>
            <person name="Christoffels A."/>
            <person name="Clutterbuck D.R."/>
            <person name="Crowe M.L."/>
            <person name="Dalla E."/>
            <person name="Dalrymple B.P."/>
            <person name="de Bono B."/>
            <person name="Della Gatta G."/>
            <person name="di Bernardo D."/>
            <person name="Down T."/>
            <person name="Engstrom P."/>
            <person name="Fagiolini M."/>
            <person name="Faulkner G."/>
            <person name="Fletcher C.F."/>
            <person name="Fukushima T."/>
            <person name="Furuno M."/>
            <person name="Futaki S."/>
            <person name="Gariboldi M."/>
            <person name="Georgii-Hemming P."/>
            <person name="Gingeras T.R."/>
            <person name="Gojobori T."/>
            <person name="Green R.E."/>
            <person name="Gustincich S."/>
            <person name="Harbers M."/>
            <person name="Hayashi Y."/>
            <person name="Hensch T.K."/>
            <person name="Hirokawa N."/>
            <person name="Hill D."/>
            <person name="Huminiecki L."/>
            <person name="Iacono M."/>
            <person name="Ikeo K."/>
            <person name="Iwama A."/>
            <person name="Ishikawa T."/>
            <person name="Jakt M."/>
            <person name="Kanapin A."/>
            <person name="Katoh M."/>
            <person name="Kawasawa Y."/>
            <person name="Kelso J."/>
            <person name="Kitamura H."/>
            <person name="Kitano H."/>
            <person name="Kollias G."/>
            <person name="Krishnan S.P."/>
            <person name="Kruger A."/>
            <person name="Kummerfeld S.K."/>
            <person name="Kurochkin I.V."/>
            <person name="Lareau L.F."/>
            <person name="Lazarevic D."/>
            <person name="Lipovich L."/>
            <person name="Liu J."/>
            <person name="Liuni S."/>
            <person name="McWilliam S."/>
            <person name="Madan Babu M."/>
            <person name="Madera M."/>
            <person name="Marchionni L."/>
            <person name="Matsuda H."/>
            <person name="Matsuzawa S."/>
            <person name="Miki H."/>
            <person name="Mignone F."/>
            <person name="Miyake S."/>
            <person name="Morris K."/>
            <person name="Mottagui-Tabar S."/>
            <person name="Mulder N."/>
            <person name="Nakano N."/>
            <person name="Nakauchi H."/>
            <person name="Ng P."/>
            <person name="Nilsson R."/>
            <person name="Nishiguchi S."/>
            <person name="Nishikawa S."/>
            <person name="Nori F."/>
            <person name="Ohara O."/>
            <person name="Okazaki Y."/>
            <person name="Orlando V."/>
            <person name="Pang K.C."/>
            <person name="Pavan W.J."/>
            <person name="Pavesi G."/>
            <person name="Pesole G."/>
            <person name="Petrovsky N."/>
            <person name="Piazza S."/>
            <person name="Reed J."/>
            <person name="Reid J.F."/>
            <person name="Ring B.Z."/>
            <person name="Ringwald M."/>
            <person name="Rost B."/>
            <person name="Ruan Y."/>
            <person name="Salzberg S.L."/>
            <person name="Sandelin A."/>
            <person name="Schneider C."/>
            <person name="Schoenbach C."/>
            <person name="Sekiguchi K."/>
            <person name="Semple C.A."/>
            <person name="Seno S."/>
            <person name="Sessa L."/>
            <person name="Sheng Y."/>
            <person name="Shibata Y."/>
            <person name="Shimada H."/>
            <person name="Shimada K."/>
            <person name="Silva D."/>
            <person name="Sinclair B."/>
            <person name="Sperling S."/>
            <person name="Stupka E."/>
            <person name="Sugiura K."/>
            <person name="Sultana R."/>
            <person name="Takenaka Y."/>
            <person name="Taki K."/>
            <person name="Tammoja K."/>
            <person name="Tan S.L."/>
            <person name="Tang S."/>
            <person name="Taylor M.S."/>
            <person name="Tegner J."/>
            <person name="Teichmann S.A."/>
            <person name="Ueda H.R."/>
            <person name="van Nimwegen E."/>
            <person name="Verardo R."/>
            <person name="Wei C.L."/>
            <person name="Yagi K."/>
            <person name="Yamanishi H."/>
            <person name="Zabarovsky E."/>
            <person name="Zhu S."/>
            <person name="Zimmer A."/>
            <person name="Hide W."/>
            <person name="Bult C."/>
            <person name="Grimmond S.M."/>
            <person name="Teasdale R.D."/>
            <person name="Liu E.T."/>
            <person name="Brusic V."/>
            <person name="Quackenbush J."/>
            <person name="Wahlestedt C."/>
            <person name="Mattick J.S."/>
            <person name="Hume D.A."/>
            <person name="Kai C."/>
            <person name="Sasaki D."/>
            <person name="Tomaru Y."/>
            <person name="Fukuda S."/>
            <person name="Kanamori-Katayama M."/>
            <person name="Suzuki M."/>
            <person name="Aoki J."/>
            <person name="Arakawa T."/>
            <person name="Iida J."/>
            <person name="Imamura K."/>
            <person name="Itoh M."/>
            <person name="Kato T."/>
            <person name="Kawaji H."/>
            <person name="Kawagashira N."/>
            <person name="Kawashima T."/>
            <person name="Kojima M."/>
            <person name="Kondo S."/>
            <person name="Konno H."/>
            <person name="Nakano K."/>
            <person name="Ninomiya N."/>
            <person name="Nishio T."/>
            <person name="Okada M."/>
            <person name="Plessy C."/>
            <person name="Shibata K."/>
            <person name="Shiraki T."/>
            <person name="Suzuki S."/>
            <person name="Tagami M."/>
            <person name="Waki K."/>
            <person name="Watahiki A."/>
            <person name="Okamura-Oho Y."/>
            <person name="Suzuki H."/>
            <person name="Kawai J."/>
            <person name="Hayashizaki Y."/>
        </authorList>
    </citation>
    <scope>NUCLEOTIDE SEQUENCE [LARGE SCALE MRNA]</scope>
    <source>
        <strain>C57BL/6J</strain>
        <tissue>Olfactory bulb</tissue>
    </source>
</reference>
<reference key="2">
    <citation type="journal article" date="2004" name="Genome Res.">
        <title>The status, quality, and expansion of the NIH full-length cDNA project: the Mammalian Gene Collection (MGC).</title>
        <authorList>
            <consortium name="The MGC Project Team"/>
        </authorList>
    </citation>
    <scope>NUCLEOTIDE SEQUENCE [LARGE SCALE MRNA]</scope>
    <source>
        <tissue>Brain</tissue>
    </source>
</reference>
<reference key="3">
    <citation type="journal article" date="2010" name="Cell">
        <title>A tissue-specific atlas of mouse protein phosphorylation and expression.</title>
        <authorList>
            <person name="Huttlin E.L."/>
            <person name="Jedrychowski M.P."/>
            <person name="Elias J.E."/>
            <person name="Goswami T."/>
            <person name="Rad R."/>
            <person name="Beausoleil S.A."/>
            <person name="Villen J."/>
            <person name="Haas W."/>
            <person name="Sowa M.E."/>
            <person name="Gygi S.P."/>
        </authorList>
    </citation>
    <scope>IDENTIFICATION BY MASS SPECTROMETRY [LARGE SCALE ANALYSIS]</scope>
    <source>
        <tissue>Heart</tissue>
        <tissue>Liver</tissue>
        <tissue>Lung</tissue>
        <tissue>Spleen</tissue>
    </source>
</reference>